<dbReference type="EMBL" id="U05252">
    <property type="protein sequence ID" value="AAA17372.1"/>
    <property type="molecule type" value="mRNA"/>
</dbReference>
<dbReference type="EMBL" id="AK088563">
    <property type="protein sequence ID" value="BAC40427.1"/>
    <property type="molecule type" value="mRNA"/>
</dbReference>
<dbReference type="EMBL" id="AK158518">
    <property type="protein sequence ID" value="BAE34542.1"/>
    <property type="molecule type" value="mRNA"/>
</dbReference>
<dbReference type="EMBL" id="CT010371">
    <property type="protein sequence ID" value="CAJ18578.1"/>
    <property type="molecule type" value="mRNA"/>
</dbReference>
<dbReference type="EMBL" id="BC011132">
    <property type="protein sequence ID" value="AAH11132.1"/>
    <property type="molecule type" value="mRNA"/>
</dbReference>
<dbReference type="EMBL" id="CH466559">
    <property type="protein sequence ID" value="EDL23652.1"/>
    <property type="molecule type" value="Genomic_DNA"/>
</dbReference>
<dbReference type="CCDS" id="CCDS28876.1"/>
<dbReference type="PIR" id="A56208">
    <property type="entry name" value="A56208"/>
</dbReference>
<dbReference type="RefSeq" id="NP_001157102.1">
    <property type="nucleotide sequence ID" value="NM_001163630.1"/>
</dbReference>
<dbReference type="RefSeq" id="NP_001157103.1">
    <property type="nucleotide sequence ID" value="NM_001163631.1"/>
</dbReference>
<dbReference type="RefSeq" id="NP_001157104.1">
    <property type="nucleotide sequence ID" value="NM_001163632.1"/>
</dbReference>
<dbReference type="RefSeq" id="NP_001344567.1">
    <property type="nucleotide sequence ID" value="NM_001357638.1"/>
</dbReference>
<dbReference type="RefSeq" id="NP_033148.2">
    <property type="nucleotide sequence ID" value="NM_009122.2"/>
</dbReference>
<dbReference type="RefSeq" id="XP_017172852.1">
    <property type="nucleotide sequence ID" value="XM_017317363.1"/>
</dbReference>
<dbReference type="RefSeq" id="XP_017172853.1">
    <property type="nucleotide sequence ID" value="XM_017317364.1"/>
</dbReference>
<dbReference type="PDB" id="4Q2J">
    <property type="method" value="X-ray"/>
    <property type="resolution" value="2.60 A"/>
    <property type="chains" value="A/B/C/D=71-246"/>
</dbReference>
<dbReference type="PDBsum" id="4Q2J"/>
<dbReference type="BMRB" id="Q60611"/>
<dbReference type="SMR" id="Q60611"/>
<dbReference type="BioGRID" id="203077">
    <property type="interactions" value="7"/>
</dbReference>
<dbReference type="FunCoup" id="Q60611">
    <property type="interactions" value="1480"/>
</dbReference>
<dbReference type="IntAct" id="Q60611">
    <property type="interactions" value="1"/>
</dbReference>
<dbReference type="MINT" id="Q60611"/>
<dbReference type="STRING" id="10090.ENSMUSP00000116006"/>
<dbReference type="GlyGen" id="Q60611">
    <property type="glycosylation" value="1 site, 1 N-linked glycan (1 site)"/>
</dbReference>
<dbReference type="iPTMnet" id="Q60611"/>
<dbReference type="PhosphoSitePlus" id="Q60611"/>
<dbReference type="jPOST" id="Q60611"/>
<dbReference type="PaxDb" id="10090-ENSMUSP00000116006"/>
<dbReference type="ProteomicsDB" id="256706"/>
<dbReference type="Antibodypedia" id="11251">
    <property type="antibodies" value="528 antibodies from 43 providers"/>
</dbReference>
<dbReference type="DNASU" id="20230"/>
<dbReference type="Ensembl" id="ENSMUST00000129667.8">
    <property type="protein sequence ID" value="ENSMUSP00000116020.3"/>
    <property type="gene ID" value="ENSMUSG00000023927.16"/>
</dbReference>
<dbReference type="Ensembl" id="ENSMUST00000133574.8">
    <property type="protein sequence ID" value="ENSMUSP00000120536.2"/>
    <property type="gene ID" value="ENSMUSG00000023927.16"/>
</dbReference>
<dbReference type="Ensembl" id="ENSMUST00000144331.8">
    <property type="protein sequence ID" value="ENSMUSP00000116006.2"/>
    <property type="gene ID" value="ENSMUSG00000023927.16"/>
</dbReference>
<dbReference type="Ensembl" id="ENSMUST00000152830.9">
    <property type="protein sequence ID" value="ENSMUSP00000119842.3"/>
    <property type="gene ID" value="ENSMUSG00000023927.16"/>
</dbReference>
<dbReference type="Ensembl" id="ENSMUST00000169480.8">
    <property type="protein sequence ID" value="ENSMUSP00000128841.2"/>
    <property type="gene ID" value="ENSMUSG00000023927.16"/>
</dbReference>
<dbReference type="Ensembl" id="ENSMUST00000176669.8">
    <property type="protein sequence ID" value="ENSMUSP00000134957.2"/>
    <property type="gene ID" value="ENSMUSG00000023927.16"/>
</dbReference>
<dbReference type="GeneID" id="20230"/>
<dbReference type="KEGG" id="mmu:20230"/>
<dbReference type="UCSC" id="uc008czd.2">
    <property type="organism name" value="mouse"/>
</dbReference>
<dbReference type="AGR" id="MGI:105084"/>
<dbReference type="CTD" id="6304"/>
<dbReference type="MGI" id="MGI:105084">
    <property type="gene designation" value="Satb1"/>
</dbReference>
<dbReference type="VEuPathDB" id="HostDB:ENSMUSG00000023927"/>
<dbReference type="eggNOG" id="KOG3755">
    <property type="taxonomic scope" value="Eukaryota"/>
</dbReference>
<dbReference type="GeneTree" id="ENSGT00390000008096"/>
<dbReference type="HOGENOM" id="CLU_012559_1_0_1"/>
<dbReference type="InParanoid" id="Q60611"/>
<dbReference type="OrthoDB" id="10052721at2759"/>
<dbReference type="PhylomeDB" id="Q60611"/>
<dbReference type="TreeFam" id="TF332714"/>
<dbReference type="Reactome" id="R-MMU-111465">
    <property type="pathway name" value="Apoptotic cleavage of cellular proteins"/>
</dbReference>
<dbReference type="Reactome" id="R-MMU-4551638">
    <property type="pathway name" value="SUMOylation of chromatin organization proteins"/>
</dbReference>
<dbReference type="BioGRID-ORCS" id="20230">
    <property type="hits" value="5 hits in 83 CRISPR screens"/>
</dbReference>
<dbReference type="ChiTaRS" id="Satb1">
    <property type="organism name" value="mouse"/>
</dbReference>
<dbReference type="EvolutionaryTrace" id="Q60611"/>
<dbReference type="PRO" id="PR:Q60611"/>
<dbReference type="Proteomes" id="UP000000589">
    <property type="component" value="Chromosome 17"/>
</dbReference>
<dbReference type="RNAct" id="Q60611">
    <property type="molecule type" value="protein"/>
</dbReference>
<dbReference type="Bgee" id="ENSMUSG00000023927">
    <property type="expression patterns" value="Expressed in thymus and 295 other cell types or tissues"/>
</dbReference>
<dbReference type="ExpressionAtlas" id="Q60611">
    <property type="expression patterns" value="baseline and differential"/>
</dbReference>
<dbReference type="GO" id="GO:0000785">
    <property type="term" value="C:chromatin"/>
    <property type="evidence" value="ECO:0000314"/>
    <property type="project" value="MGI"/>
</dbReference>
<dbReference type="GO" id="GO:0000792">
    <property type="term" value="C:heterochromatin"/>
    <property type="evidence" value="ECO:0000314"/>
    <property type="project" value="MGI"/>
</dbReference>
<dbReference type="GO" id="GO:0016363">
    <property type="term" value="C:nuclear matrix"/>
    <property type="evidence" value="ECO:0000314"/>
    <property type="project" value="MGI"/>
</dbReference>
<dbReference type="GO" id="GO:0016605">
    <property type="term" value="C:PML body"/>
    <property type="evidence" value="ECO:0007669"/>
    <property type="project" value="UniProtKB-SubCell"/>
</dbReference>
<dbReference type="GO" id="GO:0003682">
    <property type="term" value="F:chromatin binding"/>
    <property type="evidence" value="ECO:0000314"/>
    <property type="project" value="MGI"/>
</dbReference>
<dbReference type="GO" id="GO:0003677">
    <property type="term" value="F:DNA binding"/>
    <property type="evidence" value="ECO:0000314"/>
    <property type="project" value="MGI"/>
</dbReference>
<dbReference type="GO" id="GO:0003700">
    <property type="term" value="F:DNA-binding transcription factor activity"/>
    <property type="evidence" value="ECO:0000314"/>
    <property type="project" value="MGI"/>
</dbReference>
<dbReference type="GO" id="GO:0140297">
    <property type="term" value="F:DNA-binding transcription factor binding"/>
    <property type="evidence" value="ECO:0000353"/>
    <property type="project" value="ARUK-UCL"/>
</dbReference>
<dbReference type="GO" id="GO:0050798">
    <property type="term" value="P:activated T cell proliferation"/>
    <property type="evidence" value="ECO:0000315"/>
    <property type="project" value="MGI"/>
</dbReference>
<dbReference type="GO" id="GO:0043367">
    <property type="term" value="P:CD4-positive, alpha-beta T cell differentiation"/>
    <property type="evidence" value="ECO:0000315"/>
    <property type="project" value="MGI"/>
</dbReference>
<dbReference type="GO" id="GO:0043374">
    <property type="term" value="P:CD8-positive, alpha-beta T cell differentiation"/>
    <property type="evidence" value="ECO:0000315"/>
    <property type="project" value="MGI"/>
</dbReference>
<dbReference type="GO" id="GO:0006325">
    <property type="term" value="P:chromatin organization"/>
    <property type="evidence" value="ECO:0000314"/>
    <property type="project" value="MGI"/>
</dbReference>
<dbReference type="GO" id="GO:0006338">
    <property type="term" value="P:chromatin remodeling"/>
    <property type="evidence" value="ECO:0000315"/>
    <property type="project" value="MGI"/>
</dbReference>
<dbReference type="GO" id="GO:0008544">
    <property type="term" value="P:epidermis development"/>
    <property type="evidence" value="ECO:0000315"/>
    <property type="project" value="MGI"/>
</dbReference>
<dbReference type="GO" id="GO:0000122">
    <property type="term" value="P:negative regulation of transcription by RNA polymerase II"/>
    <property type="evidence" value="ECO:0000314"/>
    <property type="project" value="MGI"/>
</dbReference>
<dbReference type="GO" id="GO:0060004">
    <property type="term" value="P:reflex"/>
    <property type="evidence" value="ECO:0000315"/>
    <property type="project" value="MGI"/>
</dbReference>
<dbReference type="GO" id="GO:0006355">
    <property type="term" value="P:regulation of DNA-templated transcription"/>
    <property type="evidence" value="ECO:0000314"/>
    <property type="project" value="MGI"/>
</dbReference>
<dbReference type="GO" id="GO:0042110">
    <property type="term" value="P:T cell activation"/>
    <property type="evidence" value="ECO:0000315"/>
    <property type="project" value="MGI"/>
</dbReference>
<dbReference type="CDD" id="cd00086">
    <property type="entry name" value="homeodomain"/>
    <property type="match status" value="1"/>
</dbReference>
<dbReference type="CDD" id="cd11585">
    <property type="entry name" value="SATB1_N"/>
    <property type="match status" value="1"/>
</dbReference>
<dbReference type="FunFam" id="1.10.10.60:FF:000070">
    <property type="entry name" value="DNA-binding protein SATB"/>
    <property type="match status" value="1"/>
</dbReference>
<dbReference type="FunFam" id="1.10.260.40:FF:000003">
    <property type="entry name" value="DNA-binding protein SATB"/>
    <property type="match status" value="2"/>
</dbReference>
<dbReference type="FunFam" id="1.10.260.70:FF:000001">
    <property type="entry name" value="DNA-binding protein SATB"/>
    <property type="match status" value="1"/>
</dbReference>
<dbReference type="FunFam" id="3.10.20.710:FF:000001">
    <property type="entry name" value="DNA-binding protein SATB"/>
    <property type="match status" value="1"/>
</dbReference>
<dbReference type="Gene3D" id="1.10.10.60">
    <property type="entry name" value="Homeodomain-like"/>
    <property type="match status" value="1"/>
</dbReference>
<dbReference type="Gene3D" id="1.10.260.40">
    <property type="entry name" value="lambda repressor-like DNA-binding domains"/>
    <property type="match status" value="2"/>
</dbReference>
<dbReference type="Gene3D" id="1.10.260.70">
    <property type="entry name" value="SATB, CULT domain"/>
    <property type="match status" value="1"/>
</dbReference>
<dbReference type="Gene3D" id="3.10.20.710">
    <property type="entry name" value="SATB, ubiquitin-like oligomerisation domain"/>
    <property type="match status" value="1"/>
</dbReference>
<dbReference type="InterPro" id="IPR003350">
    <property type="entry name" value="CUT_dom"/>
</dbReference>
<dbReference type="InterPro" id="IPR032355">
    <property type="entry name" value="CUTL"/>
</dbReference>
<dbReference type="InterPro" id="IPR001356">
    <property type="entry name" value="HD"/>
</dbReference>
<dbReference type="InterPro" id="IPR009057">
    <property type="entry name" value="Homeodomain-like_sf"/>
</dbReference>
<dbReference type="InterPro" id="IPR010982">
    <property type="entry name" value="Lambda_DNA-bd_dom_sf"/>
</dbReference>
<dbReference type="InterPro" id="IPR039673">
    <property type="entry name" value="SATB1/SATB2"/>
</dbReference>
<dbReference type="InterPro" id="IPR038216">
    <property type="entry name" value="SATB_CUTL_sf"/>
</dbReference>
<dbReference type="InterPro" id="IPR038224">
    <property type="entry name" value="SATB_ULD_sf"/>
</dbReference>
<dbReference type="InterPro" id="IPR032392">
    <property type="entry name" value="ULD"/>
</dbReference>
<dbReference type="PANTHER" id="PTHR15116">
    <property type="entry name" value="DNA-BINDING PROTEIN SATB FAMILY MEMBER"/>
    <property type="match status" value="1"/>
</dbReference>
<dbReference type="PANTHER" id="PTHR15116:SF14">
    <property type="entry name" value="DNA-BINDING PROTEIN SATB1"/>
    <property type="match status" value="1"/>
</dbReference>
<dbReference type="Pfam" id="PF02376">
    <property type="entry name" value="CUT"/>
    <property type="match status" value="2"/>
</dbReference>
<dbReference type="Pfam" id="PF16557">
    <property type="entry name" value="CUTL"/>
    <property type="match status" value="1"/>
</dbReference>
<dbReference type="Pfam" id="PF00046">
    <property type="entry name" value="Homeodomain"/>
    <property type="match status" value="1"/>
</dbReference>
<dbReference type="Pfam" id="PF16534">
    <property type="entry name" value="ULD"/>
    <property type="match status" value="1"/>
</dbReference>
<dbReference type="SMART" id="SM01109">
    <property type="entry name" value="CUT"/>
    <property type="match status" value="2"/>
</dbReference>
<dbReference type="SMART" id="SM00389">
    <property type="entry name" value="HOX"/>
    <property type="match status" value="1"/>
</dbReference>
<dbReference type="SUPFAM" id="SSF46689">
    <property type="entry name" value="Homeodomain-like"/>
    <property type="match status" value="1"/>
</dbReference>
<dbReference type="SUPFAM" id="SSF47413">
    <property type="entry name" value="lambda repressor-like DNA-binding domains"/>
    <property type="match status" value="2"/>
</dbReference>
<dbReference type="PROSITE" id="PS51982">
    <property type="entry name" value="CMP"/>
    <property type="match status" value="1"/>
</dbReference>
<dbReference type="PROSITE" id="PS51042">
    <property type="entry name" value="CUT"/>
    <property type="match status" value="2"/>
</dbReference>
<dbReference type="PROSITE" id="PS51983">
    <property type="entry name" value="CUTL"/>
    <property type="match status" value="1"/>
</dbReference>
<dbReference type="PROSITE" id="PS50071">
    <property type="entry name" value="HOMEOBOX_2"/>
    <property type="match status" value="1"/>
</dbReference>
<proteinExistence type="evidence at protein level"/>
<organism>
    <name type="scientific">Mus musculus</name>
    <name type="common">Mouse</name>
    <dbReference type="NCBI Taxonomy" id="10090"/>
    <lineage>
        <taxon>Eukaryota</taxon>
        <taxon>Metazoa</taxon>
        <taxon>Chordata</taxon>
        <taxon>Craniata</taxon>
        <taxon>Vertebrata</taxon>
        <taxon>Euteleostomi</taxon>
        <taxon>Mammalia</taxon>
        <taxon>Eutheria</taxon>
        <taxon>Euarchontoglires</taxon>
        <taxon>Glires</taxon>
        <taxon>Rodentia</taxon>
        <taxon>Myomorpha</taxon>
        <taxon>Muroidea</taxon>
        <taxon>Muridae</taxon>
        <taxon>Murinae</taxon>
        <taxon>Mus</taxon>
        <taxon>Mus</taxon>
    </lineage>
</organism>
<name>SATB1_MOUSE</name>
<reference key="1">
    <citation type="journal article" date="1994" name="Mol. Cell. Biol.">
        <title>A novel DNA-binding motif in the nuclear matrix attachment DNA-binding protein SATB1.</title>
        <authorList>
            <person name="Nakagomi K."/>
            <person name="Kohwi Y."/>
            <person name="Dickinson L.A."/>
            <person name="Kohwi-Shigematsu T."/>
        </authorList>
    </citation>
    <scope>NUCLEOTIDE SEQUENCE [MRNA]</scope>
    <source>
        <tissue>Thymus</tissue>
    </source>
</reference>
<reference key="2">
    <citation type="journal article" date="2005" name="Science">
        <title>The transcriptional landscape of the mammalian genome.</title>
        <authorList>
            <person name="Carninci P."/>
            <person name="Kasukawa T."/>
            <person name="Katayama S."/>
            <person name="Gough J."/>
            <person name="Frith M.C."/>
            <person name="Maeda N."/>
            <person name="Oyama R."/>
            <person name="Ravasi T."/>
            <person name="Lenhard B."/>
            <person name="Wells C."/>
            <person name="Kodzius R."/>
            <person name="Shimokawa K."/>
            <person name="Bajic V.B."/>
            <person name="Brenner S.E."/>
            <person name="Batalov S."/>
            <person name="Forrest A.R."/>
            <person name="Zavolan M."/>
            <person name="Davis M.J."/>
            <person name="Wilming L.G."/>
            <person name="Aidinis V."/>
            <person name="Allen J.E."/>
            <person name="Ambesi-Impiombato A."/>
            <person name="Apweiler R."/>
            <person name="Aturaliya R.N."/>
            <person name="Bailey T.L."/>
            <person name="Bansal M."/>
            <person name="Baxter L."/>
            <person name="Beisel K.W."/>
            <person name="Bersano T."/>
            <person name="Bono H."/>
            <person name="Chalk A.M."/>
            <person name="Chiu K.P."/>
            <person name="Choudhary V."/>
            <person name="Christoffels A."/>
            <person name="Clutterbuck D.R."/>
            <person name="Crowe M.L."/>
            <person name="Dalla E."/>
            <person name="Dalrymple B.P."/>
            <person name="de Bono B."/>
            <person name="Della Gatta G."/>
            <person name="di Bernardo D."/>
            <person name="Down T."/>
            <person name="Engstrom P."/>
            <person name="Fagiolini M."/>
            <person name="Faulkner G."/>
            <person name="Fletcher C.F."/>
            <person name="Fukushima T."/>
            <person name="Furuno M."/>
            <person name="Futaki S."/>
            <person name="Gariboldi M."/>
            <person name="Georgii-Hemming P."/>
            <person name="Gingeras T.R."/>
            <person name="Gojobori T."/>
            <person name="Green R.E."/>
            <person name="Gustincich S."/>
            <person name="Harbers M."/>
            <person name="Hayashi Y."/>
            <person name="Hensch T.K."/>
            <person name="Hirokawa N."/>
            <person name="Hill D."/>
            <person name="Huminiecki L."/>
            <person name="Iacono M."/>
            <person name="Ikeo K."/>
            <person name="Iwama A."/>
            <person name="Ishikawa T."/>
            <person name="Jakt M."/>
            <person name="Kanapin A."/>
            <person name="Katoh M."/>
            <person name="Kawasawa Y."/>
            <person name="Kelso J."/>
            <person name="Kitamura H."/>
            <person name="Kitano H."/>
            <person name="Kollias G."/>
            <person name="Krishnan S.P."/>
            <person name="Kruger A."/>
            <person name="Kummerfeld S.K."/>
            <person name="Kurochkin I.V."/>
            <person name="Lareau L.F."/>
            <person name="Lazarevic D."/>
            <person name="Lipovich L."/>
            <person name="Liu J."/>
            <person name="Liuni S."/>
            <person name="McWilliam S."/>
            <person name="Madan Babu M."/>
            <person name="Madera M."/>
            <person name="Marchionni L."/>
            <person name="Matsuda H."/>
            <person name="Matsuzawa S."/>
            <person name="Miki H."/>
            <person name="Mignone F."/>
            <person name="Miyake S."/>
            <person name="Morris K."/>
            <person name="Mottagui-Tabar S."/>
            <person name="Mulder N."/>
            <person name="Nakano N."/>
            <person name="Nakauchi H."/>
            <person name="Ng P."/>
            <person name="Nilsson R."/>
            <person name="Nishiguchi S."/>
            <person name="Nishikawa S."/>
            <person name="Nori F."/>
            <person name="Ohara O."/>
            <person name="Okazaki Y."/>
            <person name="Orlando V."/>
            <person name="Pang K.C."/>
            <person name="Pavan W.J."/>
            <person name="Pavesi G."/>
            <person name="Pesole G."/>
            <person name="Petrovsky N."/>
            <person name="Piazza S."/>
            <person name="Reed J."/>
            <person name="Reid J.F."/>
            <person name="Ring B.Z."/>
            <person name="Ringwald M."/>
            <person name="Rost B."/>
            <person name="Ruan Y."/>
            <person name="Salzberg S.L."/>
            <person name="Sandelin A."/>
            <person name="Schneider C."/>
            <person name="Schoenbach C."/>
            <person name="Sekiguchi K."/>
            <person name="Semple C.A."/>
            <person name="Seno S."/>
            <person name="Sessa L."/>
            <person name="Sheng Y."/>
            <person name="Shibata Y."/>
            <person name="Shimada H."/>
            <person name="Shimada K."/>
            <person name="Silva D."/>
            <person name="Sinclair B."/>
            <person name="Sperling S."/>
            <person name="Stupka E."/>
            <person name="Sugiura K."/>
            <person name="Sultana R."/>
            <person name="Takenaka Y."/>
            <person name="Taki K."/>
            <person name="Tammoja K."/>
            <person name="Tan S.L."/>
            <person name="Tang S."/>
            <person name="Taylor M.S."/>
            <person name="Tegner J."/>
            <person name="Teichmann S.A."/>
            <person name="Ueda H.R."/>
            <person name="van Nimwegen E."/>
            <person name="Verardo R."/>
            <person name="Wei C.L."/>
            <person name="Yagi K."/>
            <person name="Yamanishi H."/>
            <person name="Zabarovsky E."/>
            <person name="Zhu S."/>
            <person name="Zimmer A."/>
            <person name="Hide W."/>
            <person name="Bult C."/>
            <person name="Grimmond S.M."/>
            <person name="Teasdale R.D."/>
            <person name="Liu E.T."/>
            <person name="Brusic V."/>
            <person name="Quackenbush J."/>
            <person name="Wahlestedt C."/>
            <person name="Mattick J.S."/>
            <person name="Hume D.A."/>
            <person name="Kai C."/>
            <person name="Sasaki D."/>
            <person name="Tomaru Y."/>
            <person name="Fukuda S."/>
            <person name="Kanamori-Katayama M."/>
            <person name="Suzuki M."/>
            <person name="Aoki J."/>
            <person name="Arakawa T."/>
            <person name="Iida J."/>
            <person name="Imamura K."/>
            <person name="Itoh M."/>
            <person name="Kato T."/>
            <person name="Kawaji H."/>
            <person name="Kawagashira N."/>
            <person name="Kawashima T."/>
            <person name="Kojima M."/>
            <person name="Kondo S."/>
            <person name="Konno H."/>
            <person name="Nakano K."/>
            <person name="Ninomiya N."/>
            <person name="Nishio T."/>
            <person name="Okada M."/>
            <person name="Plessy C."/>
            <person name="Shibata K."/>
            <person name="Shiraki T."/>
            <person name="Suzuki S."/>
            <person name="Tagami M."/>
            <person name="Waki K."/>
            <person name="Watahiki A."/>
            <person name="Okamura-Oho Y."/>
            <person name="Suzuki H."/>
            <person name="Kawai J."/>
            <person name="Hayashizaki Y."/>
        </authorList>
    </citation>
    <scope>NUCLEOTIDE SEQUENCE [LARGE SCALE MRNA]</scope>
    <source>
        <strain>C57BL/6J</strain>
        <strain>NOD</strain>
        <tissue>Thymus</tissue>
        <tissue>Visual cortex</tissue>
    </source>
</reference>
<reference key="3">
    <citation type="submission" date="2005-07" db="EMBL/GenBank/DDBJ databases">
        <title>Cloning of mouse full open reading frames in Gateway(R) system entry vector (pDONR201).</title>
        <authorList>
            <person name="Ebert L."/>
            <person name="Muenstermann E."/>
            <person name="Schatten R."/>
            <person name="Henze S."/>
            <person name="Bohn E."/>
            <person name="Mollenhauer J."/>
            <person name="Wiemann S."/>
            <person name="Schick M."/>
            <person name="Korn B."/>
        </authorList>
    </citation>
    <scope>NUCLEOTIDE SEQUENCE [LARGE SCALE MRNA]</scope>
</reference>
<reference key="4">
    <citation type="submission" date="2005-07" db="EMBL/GenBank/DDBJ databases">
        <authorList>
            <person name="Mural R.J."/>
            <person name="Adams M.D."/>
            <person name="Myers E.W."/>
            <person name="Smith H.O."/>
            <person name="Venter J.C."/>
        </authorList>
    </citation>
    <scope>NUCLEOTIDE SEQUENCE [LARGE SCALE GENOMIC DNA]</scope>
</reference>
<reference key="5">
    <citation type="journal article" date="2004" name="Genome Res.">
        <title>The status, quality, and expansion of the NIH full-length cDNA project: the Mammalian Gene Collection (MGC).</title>
        <authorList>
            <consortium name="The MGC Project Team"/>
        </authorList>
    </citation>
    <scope>NUCLEOTIDE SEQUENCE [LARGE SCALE MRNA]</scope>
    <source>
        <strain>FVB/N</strain>
        <tissue>Salivary gland</tissue>
    </source>
</reference>
<reference key="6">
    <citation type="journal article" date="2001" name="Mol. Cell. Biol.">
        <title>SATB1 cleavage by caspase 6 disrupts PDZ domain-mediated dimerization, causing detachment from chromatin early in T-cell apoptosis.</title>
        <authorList>
            <person name="Galande S."/>
            <person name="Dickinson L.A."/>
            <person name="Mian I.S."/>
            <person name="Sikorska M."/>
            <person name="Kohwi-Shigematsu T."/>
        </authorList>
    </citation>
    <scope>PROTEIN SEQUENCE OF 255-259</scope>
    <scope>FUNCTION</scope>
    <scope>DIMERIZATION</scope>
    <scope>CLEAVAGE BY CASP6</scope>
</reference>
<reference key="7">
    <citation type="journal article" date="1997" name="Mol. Cell. Biol.">
        <title>The matrix attachment region-binding protein SATB1 participates in negative regulation of tissue-specific gene expression.</title>
        <authorList>
            <person name="Liu J."/>
            <person name="Bramblett D."/>
            <person name="Zhu Q."/>
            <person name="Lozano M."/>
            <person name="Kobayashi R."/>
            <person name="Ross S.R."/>
            <person name="Dudley J.P."/>
        </authorList>
    </citation>
    <scope>FUNCTION</scope>
</reference>
<reference key="8">
    <citation type="journal article" date="1999" name="Mol. Cell. Biol.">
        <title>Homeoproteins CDP and SATB1 interact: potential for tissue-specific regulation.</title>
        <authorList>
            <person name="Liu J."/>
            <person name="Barnett A."/>
            <person name="Neufeld E.J."/>
            <person name="Dudley J.P."/>
        </authorList>
    </citation>
    <scope>INTERACTION WITH CUX1</scope>
</reference>
<reference key="9">
    <citation type="journal article" date="2000" name="Genes Dev.">
        <title>The MAR-binding protein SATB1 orchestrates temporal and spatial expression of multiple genes during T-cell development.</title>
        <authorList>
            <person name="Alvarez J.D."/>
            <person name="Yasui D.H."/>
            <person name="Niida H."/>
            <person name="Joh T."/>
            <person name="Loh D.Y."/>
            <person name="Kohwi-Shigematsu T."/>
        </authorList>
    </citation>
    <scope>FUNCTION</scope>
    <scope>DISRUPTION PHENOTYPE</scope>
</reference>
<reference key="10">
    <citation type="journal article" date="2003" name="Nat. Genet.">
        <title>Tissue-specific nuclear architecture and gene expression regulated by SATB1.</title>
        <authorList>
            <person name="Cai S."/>
            <person name="Han H.-J."/>
            <person name="Kohwi-Shigematsu T."/>
        </authorList>
    </citation>
    <scope>FUNCTION</scope>
    <scope>SUBCELLULAR LOCATION</scope>
</reference>
<reference key="11">
    <citation type="journal article" date="2005" name="J. Biol. Chem.">
        <title>Nuclear matrix binding regulates SATB1-mediated transcriptional repression.</title>
        <authorList>
            <person name="Seo J."/>
            <person name="Lozano M.M."/>
            <person name="Dudley J.P."/>
        </authorList>
    </citation>
    <scope>SUBCELLULAR LOCATION</scope>
    <scope>NUCLEAR MATRIX TARGETING SEQUENCE</scope>
</reference>
<reference key="12">
    <citation type="journal article" date="2005" name="J. Immunol.">
        <title>A role for SATB1, a nuclear matrix association region-binding protein, in the development of CD8SP thymocytes and peripheral T lymphocytes.</title>
        <authorList>
            <person name="Nie H."/>
            <person name="Maika S.D."/>
            <person name="Tucker P.W."/>
            <person name="Gottlieb P.D."/>
        </authorList>
    </citation>
    <scope>FUNCTION</scope>
    <scope>DISRUPTION PHENOTYPE</scope>
    <scope>TISSUE SPECIFICITY</scope>
</reference>
<reference key="13">
    <citation type="journal article" date="2006" name="Nat. Genet.">
        <title>SATB1 packages densely looped, transcriptionally active chromatin for coordinated expression of cytokine genes.</title>
        <authorList>
            <person name="Cai S."/>
            <person name="Lee C.C."/>
            <person name="Kohwi-Shigematsu T."/>
        </authorList>
    </citation>
    <scope>FUNCTION</scope>
</reference>
<reference key="14">
    <citation type="journal article" date="2008" name="Mol. Immunol.">
        <title>SATB1 is required for CD8 coreceptor reversal.</title>
        <authorList>
            <person name="Nie H."/>
            <person name="Yao X."/>
            <person name="Maika S.D."/>
            <person name="Tucker P.W."/>
        </authorList>
    </citation>
    <scope>FUNCTION</scope>
</reference>
<reference key="15">
    <citation type="journal article" date="2009" name="Dev. Cell">
        <title>SATB1 defines the developmental context for gene silencing by Xist in lymphoma and embryonic cells.</title>
        <authorList>
            <person name="Agrelo R."/>
            <person name="Souabni A."/>
            <person name="Novatchkova M."/>
            <person name="Haslinger C."/>
            <person name="Leeb M."/>
            <person name="Komnenovic V."/>
            <person name="Kishimoto H."/>
            <person name="Gresh L."/>
            <person name="Kohwi-Shigematsu T."/>
            <person name="Kenner L."/>
            <person name="Wutz A."/>
        </authorList>
    </citation>
    <scope>FUNCTION</scope>
</reference>
<reference key="16">
    <citation type="journal article" date="2009" name="Mol. Cell. Biol.">
        <title>Acetylation-dependent interaction of SATB1 and CtBP1 mediates transcriptional repression by SATB1.</title>
        <authorList>
            <person name="Purbey P.K."/>
            <person name="Singh S."/>
            <person name="Notani D."/>
            <person name="Kumar P.P."/>
            <person name="Limaye A.S."/>
            <person name="Galande S."/>
        </authorList>
    </citation>
    <scope>FUNCTION</scope>
    <scope>INTERACTION WITH CTBP1</scope>
</reference>
<reference key="17">
    <citation type="journal article" date="2010" name="Cell">
        <title>A tissue-specific atlas of mouse protein phosphorylation and expression.</title>
        <authorList>
            <person name="Huttlin E.L."/>
            <person name="Jedrychowski M.P."/>
            <person name="Elias J.E."/>
            <person name="Goswami T."/>
            <person name="Rad R."/>
            <person name="Beausoleil S.A."/>
            <person name="Villen J."/>
            <person name="Haas W."/>
            <person name="Sowa M.E."/>
            <person name="Gygi S.P."/>
        </authorList>
    </citation>
    <scope>PHOSPHORYLATION [LARGE SCALE ANALYSIS] AT SER-638</scope>
    <scope>IDENTIFICATION BY MASS SPECTROMETRY [LARGE SCALE ANALYSIS]</scope>
    <source>
        <tissue>Lung</tissue>
    </source>
</reference>
<reference key="18">
    <citation type="journal article" date="2015" name="Proc. Natl. Acad. Sci. U.S.A.">
        <title>Positive feedback between RNA-binding protein HuD and transcription factor SATB1 promotes neurogenesis.</title>
        <authorList>
            <person name="Wang F."/>
            <person name="Tidei J.J."/>
            <person name="Polich E.D."/>
            <person name="Gao Y."/>
            <person name="Zhao H."/>
            <person name="Perrone-Bizzozero N.I."/>
            <person name="Guo W."/>
            <person name="Zhao X."/>
        </authorList>
    </citation>
    <scope>FUNCTION</scope>
    <scope>TISSUE SPECIFICITY</scope>
    <scope>INDUCTION BY DIFFERENTIATION</scope>
    <scope>DISRUPTION PHENOTYPE</scope>
</reference>
<sequence>MDHLNEATQGKEHSEMSNNVSDPKGPPAKIARLEQNGSPLGRGRLGSTGGKMQGVPLKHSGHLMKTNLRKGTMLPVFCVVEHYENAIEYDCKEEHAEFVLVRKDMLFNQLIEMALLSLGYSHSSAAQAKGLIQVGKWNPVPLSYVTDAPDATVADMLQDVYHVVTLKIQLHSCPKLEDLPPEQWSHTTVRNALKDLLKDMNQSSLAKECPLSQSMISSIVNSTYYANVSAAKCQEFGRWYKHFKKTKDMMVEMDSLSELSQQGANHVNFGQQPVPGNTAEQPPSPAQLSHGSQPSVRTPLPNLHPGLVSTPISPQLVNQQLVMAQLLNQQYAVNRLLAQQSLNQQYLNHPPPVSRSMNKPLEQQVSTNTEVSSEIYQWVRDELKRAGISQAVFARVAFNRTQGLLSEILRKEEDPKTASQSLLVNLRAMQNFLQLPEAERDRIYQDERERSLNAASAMGPAPLLSTPPSRPPQVKTATLATERNGKPENNTMNINASIYDEIQQEMKRAKVSQALFAKVAATKSQGWLCELLRWKEDPSPENRTLWENLSMIRRFLSLPQPERDAIYEQESNAVHHHGDRPPHIIHVPAEQIQQQQQQQQQQQQQQQPPPPPPQPQPQPQAGPRLPPRQPTVASSAESDEENRQKTRPRTKISVEALGILQSFIQDVGLYPDEEAIQTLSAQLDLPKYTIIKFFQNQRYYLKHHGKLKDNSGLEVDVAEYKDEELLKDLEESVQDKNANTLFSVKLEEELSVEGSTDVNADLKD</sequence>
<accession>Q60611</accession>
<accession>Q91XB1</accession>
<evidence type="ECO:0000250" key="1"/>
<evidence type="ECO:0000250" key="2">
    <source>
        <dbReference type="UniProtKB" id="Q01826"/>
    </source>
</evidence>
<evidence type="ECO:0000255" key="3">
    <source>
        <dbReference type="PROSITE-ProRule" id="PRU00108"/>
    </source>
</evidence>
<evidence type="ECO:0000255" key="4">
    <source>
        <dbReference type="PROSITE-ProRule" id="PRU00374"/>
    </source>
</evidence>
<evidence type="ECO:0000255" key="5">
    <source>
        <dbReference type="PROSITE-ProRule" id="PRU01326"/>
    </source>
</evidence>
<evidence type="ECO:0000255" key="6">
    <source>
        <dbReference type="PROSITE-ProRule" id="PRU01327"/>
    </source>
</evidence>
<evidence type="ECO:0000256" key="7">
    <source>
        <dbReference type="SAM" id="MobiDB-lite"/>
    </source>
</evidence>
<evidence type="ECO:0000269" key="8">
    <source>
    </source>
</evidence>
<evidence type="ECO:0000269" key="9">
    <source>
    </source>
</evidence>
<evidence type="ECO:0000269" key="10">
    <source>
    </source>
</evidence>
<evidence type="ECO:0000269" key="11">
    <source>
    </source>
</evidence>
<evidence type="ECO:0000269" key="12">
    <source>
    </source>
</evidence>
<evidence type="ECO:0000269" key="13">
    <source>
    </source>
</evidence>
<evidence type="ECO:0000269" key="14">
    <source>
    </source>
</evidence>
<evidence type="ECO:0000269" key="15">
    <source>
    </source>
</evidence>
<evidence type="ECO:0000269" key="16">
    <source>
    </source>
</evidence>
<evidence type="ECO:0000269" key="17">
    <source>
    </source>
</evidence>
<evidence type="ECO:0000269" key="18">
    <source>
    </source>
</evidence>
<evidence type="ECO:0000305" key="19"/>
<evidence type="ECO:0007744" key="20">
    <source>
    </source>
</evidence>
<evidence type="ECO:0007829" key="21">
    <source>
        <dbReference type="PDB" id="4Q2J"/>
    </source>
</evidence>
<feature type="chain" id="PRO_0000202399" description="DNA-binding protein SATB1">
    <location>
        <begin position="1"/>
        <end position="764"/>
    </location>
</feature>
<feature type="domain" description="CMP" evidence="5">
    <location>
        <begin position="71"/>
        <end position="172"/>
    </location>
</feature>
<feature type="domain" description="CUTL" evidence="6">
    <location>
        <begin position="175"/>
        <end position="248"/>
    </location>
</feature>
<feature type="DNA-binding region" description="CUT 1" evidence="4">
    <location>
        <begin position="361"/>
        <end position="448"/>
    </location>
</feature>
<feature type="DNA-binding region" description="CUT 2" evidence="4">
    <location>
        <begin position="484"/>
        <end position="571"/>
    </location>
</feature>
<feature type="DNA-binding region" description="Homeobox" evidence="3">
    <location>
        <begin position="646"/>
        <end position="705"/>
    </location>
</feature>
<feature type="region of interest" description="Disordered" evidence="7">
    <location>
        <begin position="1"/>
        <end position="56"/>
    </location>
</feature>
<feature type="region of interest" description="Nuclear matrix targeting sequence (NMTS)" evidence="1">
    <location>
        <begin position="224"/>
        <end position="278"/>
    </location>
</feature>
<feature type="region of interest" description="Disordered" evidence="7">
    <location>
        <begin position="266"/>
        <end position="307"/>
    </location>
</feature>
<feature type="region of interest" description="Disordered" evidence="7">
    <location>
        <begin position="450"/>
        <end position="474"/>
    </location>
</feature>
<feature type="region of interest" description="Disordered" evidence="7">
    <location>
        <begin position="591"/>
        <end position="650"/>
    </location>
</feature>
<feature type="short sequence motif" description="Nuclear localization signal" evidence="1">
    <location>
        <begin position="20"/>
        <end position="40"/>
    </location>
</feature>
<feature type="short sequence motif" description="Protein interaction" evidence="1">
    <location>
        <begin position="139"/>
        <end position="143"/>
    </location>
</feature>
<feature type="short sequence motif" description="Nuclear matrix targeting sequence (NMTS)">
    <location>
        <begin position="224"/>
        <end position="278"/>
    </location>
</feature>
<feature type="compositionally biased region" description="Basic and acidic residues" evidence="7">
    <location>
        <begin position="1"/>
        <end position="15"/>
    </location>
</feature>
<feature type="compositionally biased region" description="Gly residues" evidence="7">
    <location>
        <begin position="43"/>
        <end position="52"/>
    </location>
</feature>
<feature type="compositionally biased region" description="Polar residues" evidence="7">
    <location>
        <begin position="266"/>
        <end position="296"/>
    </location>
</feature>
<feature type="compositionally biased region" description="Low complexity" evidence="7">
    <location>
        <begin position="593"/>
        <end position="606"/>
    </location>
</feature>
<feature type="compositionally biased region" description="Pro residues" evidence="7">
    <location>
        <begin position="607"/>
        <end position="629"/>
    </location>
</feature>
<feature type="binding site" evidence="1">
    <location>
        <position position="390"/>
    </location>
    <ligand>
        <name>DNA</name>
        <dbReference type="ChEBI" id="CHEBI:16991"/>
    </ligand>
    <ligandPart>
        <name>matrix attachment region (MAR) of DNA</name>
    </ligandPart>
</feature>
<feature type="binding site" evidence="1">
    <location>
        <begin position="400"/>
        <end position="410"/>
    </location>
    <ligand>
        <name>DNA</name>
        <dbReference type="ChEBI" id="CHEBI:16991"/>
    </ligand>
    <ligandPart>
        <name>matrix attachment region (MAR) of DNA</name>
    </ligandPart>
</feature>
<feature type="binding site" evidence="1">
    <location>
        <position position="425"/>
    </location>
    <ligand>
        <name>DNA</name>
        <dbReference type="ChEBI" id="CHEBI:16991"/>
    </ligand>
    <ligandPart>
        <name>matrix attachment region (MAR) of DNA</name>
    </ligandPart>
</feature>
<feature type="site" description="Cleavage; by caspases">
    <location>
        <begin position="254"/>
        <end position="255"/>
    </location>
</feature>
<feature type="modified residue" description="N6-acetyllysine" evidence="2">
    <location>
        <position position="136"/>
    </location>
</feature>
<feature type="modified residue" description="Phosphoserine" evidence="2">
    <location>
        <position position="185"/>
    </location>
</feature>
<feature type="modified residue" description="Phosphoserine" evidence="20">
    <location>
        <position position="638"/>
    </location>
</feature>
<feature type="cross-link" description="Glycyl lysine isopeptide (Lys-Gly) (interchain with G-Cter in SUMO2)" evidence="2">
    <location>
        <position position="51"/>
    </location>
</feature>
<feature type="cross-link" description="Glycyl lysine isopeptide (Lys-Gly) (interchain with G-Cter in SUMO)" evidence="1">
    <location>
        <position position="745"/>
    </location>
</feature>
<feature type="sequence conflict" description="In Ref. 1; AAA17372." evidence="19" ref="1">
    <original>D</original>
    <variation>N</variation>
    <location>
        <position position="155"/>
    </location>
</feature>
<feature type="sequence conflict" description="In Ref. 1; AAA17372." evidence="19" ref="1">
    <original>L</original>
    <variation>P</variation>
    <location>
        <position position="515"/>
    </location>
</feature>
<feature type="strand" evidence="21">
    <location>
        <begin position="71"/>
        <end position="81"/>
    </location>
</feature>
<feature type="strand" evidence="21">
    <location>
        <begin position="95"/>
        <end position="102"/>
    </location>
</feature>
<feature type="helix" evidence="21">
    <location>
        <begin position="107"/>
        <end position="109"/>
    </location>
</feature>
<feature type="helix" evidence="21">
    <location>
        <begin position="110"/>
        <end position="117"/>
    </location>
</feature>
<feature type="helix" evidence="21">
    <location>
        <begin position="123"/>
        <end position="126"/>
    </location>
</feature>
<feature type="strand" evidence="21">
    <location>
        <begin position="129"/>
        <end position="134"/>
    </location>
</feature>
<feature type="helix" evidence="21">
    <location>
        <begin position="142"/>
        <end position="145"/>
    </location>
</feature>
<feature type="helix" evidence="21">
    <location>
        <begin position="153"/>
        <end position="157"/>
    </location>
</feature>
<feature type="turn" evidence="21">
    <location>
        <begin position="158"/>
        <end position="163"/>
    </location>
</feature>
<feature type="strand" evidence="21">
    <location>
        <begin position="164"/>
        <end position="169"/>
    </location>
</feature>
<feature type="turn" evidence="21">
    <location>
        <begin position="176"/>
        <end position="178"/>
    </location>
</feature>
<feature type="helix" evidence="21">
    <location>
        <begin position="181"/>
        <end position="183"/>
    </location>
</feature>
<feature type="helix" evidence="21">
    <location>
        <begin position="186"/>
        <end position="197"/>
    </location>
</feature>
<feature type="helix" evidence="21">
    <location>
        <begin position="202"/>
        <end position="208"/>
    </location>
</feature>
<feature type="strand" evidence="21">
    <location>
        <begin position="209"/>
        <end position="211"/>
    </location>
</feature>
<feature type="helix" evidence="21">
    <location>
        <begin position="213"/>
        <end position="220"/>
    </location>
</feature>
<feature type="helix" evidence="21">
    <location>
        <begin position="230"/>
        <end position="242"/>
    </location>
</feature>
<protein>
    <recommendedName>
        <fullName>DNA-binding protein SATB1</fullName>
    </recommendedName>
    <alternativeName>
        <fullName>Special AT-rich sequence-binding protein 1</fullName>
    </alternativeName>
</protein>
<keyword id="KW-0002">3D-structure</keyword>
<keyword id="KW-0007">Acetylation</keyword>
<keyword id="KW-0156">Chromatin regulator</keyword>
<keyword id="KW-0160">Chromosomal rearrangement</keyword>
<keyword id="KW-0903">Direct protein sequencing</keyword>
<keyword id="KW-0238">DNA-binding</keyword>
<keyword id="KW-0371">Homeobox</keyword>
<keyword id="KW-1017">Isopeptide bond</keyword>
<keyword id="KW-0539">Nucleus</keyword>
<keyword id="KW-0597">Phosphoprotein</keyword>
<keyword id="KW-1185">Reference proteome</keyword>
<keyword id="KW-0677">Repeat</keyword>
<keyword id="KW-0678">Repressor</keyword>
<keyword id="KW-0804">Transcription</keyword>
<keyword id="KW-0805">Transcription regulation</keyword>
<keyword id="KW-0832">Ubl conjugation</keyword>
<comment type="function">
    <text evidence="1 9 10 11 12 13 14 15 16 17 18">Required for the switching of fetal globin species, and beta- and gamma-globin genes regulation during erythroid differentiation. Plays a role in chromatin organization and nuclear architecture during apoptosis (By similarity). Crucial silencing factor contributing to the initiation of X inactivation mediated by Xist RNA that occurs during embryogenesis and in lymphoma. Binds to DNA at special AT-rich sequences, the consensus SATB1-binding sequence (CSBS), at nuclear matrix- or scaffold-associated regions. Thought to recognize the sugar-phosphate structure of double-stranded DNA. Transcriptional repressor controlling nuclear and viral gene expression in a phosphorylated and acetylated status-dependent manner, by binding to matrix attachment regions (MARs) of DNA and inducing a local chromatin-loop remodeling. Acts as a docking site for several chromatin remodeling enzymes and also by recruiting corepressors (HDACs) or coactivators (HATs) directly to promoters and enhancers. Modulates genes that are essential in the maturation of the immune T-cell CD8SP from thymocytes. Promotes neuronal differentiation of neural stem/progenitor cells in the adult subventricular zone, possibly by positively regulating the expression of NEUROD1 (PubMed:26305964).</text>
</comment>
<comment type="subunit">
    <text evidence="1 8 15">Interacts with PCAF. Interacts with sumoylated PML and HDAC1 Tat via the CMP domain. Also interacts with DYNLT3 and POLR2J2. Binds to EP300 (By similarity). Homodimer. Part of the nuclear protein complex gamma-globin promoter and enhancer binding factor (gamma-PE) composed at least of SATB1 and HOXB2. Interaction with CtBP1 when not acetylated stabilizes attachment to DNA and promotes transcription repression. Interacts with CUX1 (via DNA-binding domains); the interaction inhibits the attachment of both proteins to DNA.</text>
</comment>
<comment type="subcellular location">
    <subcellularLocation>
        <location>Nucleus</location>
    </subcellularLocation>
    <subcellularLocation>
        <location>Nucleus</location>
        <location>PML body</location>
    </subcellularLocation>
    <text evidence="1">Organized into a cage-like network anchoring loops of heterochromatin and tethering specialized DNA sequences. When sumoylated, localized in promyelocytic leukemia nuclear bodies (PML NBs) (By similarity).</text>
</comment>
<comment type="tissue specificity">
    <text evidence="12 17">Expressed in the subventricular zone, rostral migratory stream and in the olfactory bulb (at protein level) (PubMed:26305964). Mainly expressed in thymus, spleen, and lymph nodes with a lower level observed in the brain (PubMed:15814699).</text>
</comment>
<comment type="induction">
    <text evidence="17">Up-regulated during adult neuronal stem cell differentiation.</text>
</comment>
<comment type="PTM">
    <text evidence="1">Sumoylated. Sumoylation promotes cleavage by caspases.</text>
</comment>
<comment type="PTM">
    <text evidence="1">Phosphorylated by PKC. Acetylated by PCAF. Phosphorylated form interacts with HDAC1, but unphosphorylated form interacts with PCAF. DNA binding properties are activated by phosphorylation and inactivated by acetylation. In opposition, gene expression is down-regulated by phosphorylation but up-regulated by acetylation (By similarity).</text>
</comment>
<comment type="PTM">
    <text evidence="10">Cleaved at Asp-254 by caspase-3 and caspase-6 during T-cell apoptosis in thymus and during B-cell stimulation. The cleaved forms cannot dimerize and lose transcription regulation function because of impaired DNA and chromatin association.</text>
</comment>
<comment type="disruption phenotype">
    <text evidence="9 12 17">Mice are small in size, have disproportionately small thymi and spleens, and die at 3 weeks of age. Multiple defects in T-cell development are observed, including interrupted thymocytes differentiation and abnormal T-cell transcriptome. RNAi-mediated knockdown in neural stem/progenitor cells in the adult subventricular zone impairs early neuronal differentiation (PubMed:26305964).</text>
</comment>
<comment type="similarity">
    <text evidence="19">Belongs to the CUT homeobox family.</text>
</comment>
<gene>
    <name type="primary">Satb1</name>
</gene>